<organism>
    <name type="scientific">Xanthomonas axonopodis pv. citri (strain 306)</name>
    <dbReference type="NCBI Taxonomy" id="190486"/>
    <lineage>
        <taxon>Bacteria</taxon>
        <taxon>Pseudomonadati</taxon>
        <taxon>Pseudomonadota</taxon>
        <taxon>Gammaproteobacteria</taxon>
        <taxon>Lysobacterales</taxon>
        <taxon>Lysobacteraceae</taxon>
        <taxon>Xanthomonas</taxon>
    </lineage>
</organism>
<sequence>MAITQNYGTGRRKSSTARVFLRKGTGNITVNDRPLDEFFGRETARMIVRQPLELTKNTESFDIMVTASGGGTTGQAGAIRLGIARALVEYDETLKSELRKAGFMTRDAREVERKKVGLHKARRATQFSKR</sequence>
<name>RS9_XANAC</name>
<dbReference type="EMBL" id="AE008923">
    <property type="protein sequence ID" value="AAM35379.1"/>
    <property type="molecule type" value="Genomic_DNA"/>
</dbReference>
<dbReference type="RefSeq" id="WP_003483085.1">
    <property type="nucleotide sequence ID" value="NC_003919.1"/>
</dbReference>
<dbReference type="SMR" id="Q8PQ41"/>
<dbReference type="GeneID" id="97508877"/>
<dbReference type="KEGG" id="xac:XAC0488"/>
<dbReference type="eggNOG" id="COG0103">
    <property type="taxonomic scope" value="Bacteria"/>
</dbReference>
<dbReference type="HOGENOM" id="CLU_046483_2_1_6"/>
<dbReference type="Proteomes" id="UP000000576">
    <property type="component" value="Chromosome"/>
</dbReference>
<dbReference type="GO" id="GO:0022627">
    <property type="term" value="C:cytosolic small ribosomal subunit"/>
    <property type="evidence" value="ECO:0007669"/>
    <property type="project" value="TreeGrafter"/>
</dbReference>
<dbReference type="GO" id="GO:0003723">
    <property type="term" value="F:RNA binding"/>
    <property type="evidence" value="ECO:0007669"/>
    <property type="project" value="TreeGrafter"/>
</dbReference>
<dbReference type="GO" id="GO:0003735">
    <property type="term" value="F:structural constituent of ribosome"/>
    <property type="evidence" value="ECO:0007669"/>
    <property type="project" value="InterPro"/>
</dbReference>
<dbReference type="GO" id="GO:0006412">
    <property type="term" value="P:translation"/>
    <property type="evidence" value="ECO:0007669"/>
    <property type="project" value="UniProtKB-UniRule"/>
</dbReference>
<dbReference type="FunFam" id="3.30.230.10:FF:000001">
    <property type="entry name" value="30S ribosomal protein S9"/>
    <property type="match status" value="1"/>
</dbReference>
<dbReference type="Gene3D" id="3.30.230.10">
    <property type="match status" value="1"/>
</dbReference>
<dbReference type="HAMAP" id="MF_00532_B">
    <property type="entry name" value="Ribosomal_uS9_B"/>
    <property type="match status" value="1"/>
</dbReference>
<dbReference type="InterPro" id="IPR020568">
    <property type="entry name" value="Ribosomal_Su5_D2-typ_SF"/>
</dbReference>
<dbReference type="InterPro" id="IPR000754">
    <property type="entry name" value="Ribosomal_uS9"/>
</dbReference>
<dbReference type="InterPro" id="IPR023035">
    <property type="entry name" value="Ribosomal_uS9_bac/plastid"/>
</dbReference>
<dbReference type="InterPro" id="IPR020574">
    <property type="entry name" value="Ribosomal_uS9_CS"/>
</dbReference>
<dbReference type="InterPro" id="IPR014721">
    <property type="entry name" value="Ribsml_uS5_D2-typ_fold_subgr"/>
</dbReference>
<dbReference type="NCBIfam" id="NF001099">
    <property type="entry name" value="PRK00132.1"/>
    <property type="match status" value="1"/>
</dbReference>
<dbReference type="PANTHER" id="PTHR21569">
    <property type="entry name" value="RIBOSOMAL PROTEIN S9"/>
    <property type="match status" value="1"/>
</dbReference>
<dbReference type="PANTHER" id="PTHR21569:SF1">
    <property type="entry name" value="SMALL RIBOSOMAL SUBUNIT PROTEIN US9M"/>
    <property type="match status" value="1"/>
</dbReference>
<dbReference type="Pfam" id="PF00380">
    <property type="entry name" value="Ribosomal_S9"/>
    <property type="match status" value="1"/>
</dbReference>
<dbReference type="SUPFAM" id="SSF54211">
    <property type="entry name" value="Ribosomal protein S5 domain 2-like"/>
    <property type="match status" value="1"/>
</dbReference>
<dbReference type="PROSITE" id="PS00360">
    <property type="entry name" value="RIBOSOMAL_S9"/>
    <property type="match status" value="1"/>
</dbReference>
<protein>
    <recommendedName>
        <fullName evidence="1">Small ribosomal subunit protein uS9</fullName>
    </recommendedName>
    <alternativeName>
        <fullName evidence="2">30S ribosomal protein S9</fullName>
    </alternativeName>
</protein>
<comment type="similarity">
    <text evidence="1">Belongs to the universal ribosomal protein uS9 family.</text>
</comment>
<feature type="chain" id="PRO_0000111443" description="Small ribosomal subunit protein uS9">
    <location>
        <begin position="1"/>
        <end position="130"/>
    </location>
</feature>
<evidence type="ECO:0000255" key="1">
    <source>
        <dbReference type="HAMAP-Rule" id="MF_00532"/>
    </source>
</evidence>
<evidence type="ECO:0000305" key="2"/>
<gene>
    <name evidence="1" type="primary">rpsI</name>
    <name type="ordered locus">XAC0488</name>
</gene>
<accession>Q8PQ41</accession>
<reference key="1">
    <citation type="journal article" date="2002" name="Nature">
        <title>Comparison of the genomes of two Xanthomonas pathogens with differing host specificities.</title>
        <authorList>
            <person name="da Silva A.C.R."/>
            <person name="Ferro J.A."/>
            <person name="Reinach F.C."/>
            <person name="Farah C.S."/>
            <person name="Furlan L.R."/>
            <person name="Quaggio R.B."/>
            <person name="Monteiro-Vitorello C.B."/>
            <person name="Van Sluys M.A."/>
            <person name="Almeida N.F. Jr."/>
            <person name="Alves L.M.C."/>
            <person name="do Amaral A.M."/>
            <person name="Bertolini M.C."/>
            <person name="Camargo L.E.A."/>
            <person name="Camarotte G."/>
            <person name="Cannavan F."/>
            <person name="Cardozo J."/>
            <person name="Chambergo F."/>
            <person name="Ciapina L.P."/>
            <person name="Cicarelli R.M.B."/>
            <person name="Coutinho L.L."/>
            <person name="Cursino-Santos J.R."/>
            <person name="El-Dorry H."/>
            <person name="Faria J.B."/>
            <person name="Ferreira A.J.S."/>
            <person name="Ferreira R.C.C."/>
            <person name="Ferro M.I.T."/>
            <person name="Formighieri E.F."/>
            <person name="Franco M.C."/>
            <person name="Greggio C.C."/>
            <person name="Gruber A."/>
            <person name="Katsuyama A.M."/>
            <person name="Kishi L.T."/>
            <person name="Leite R.P."/>
            <person name="Lemos E.G.M."/>
            <person name="Lemos M.V.F."/>
            <person name="Locali E.C."/>
            <person name="Machado M.A."/>
            <person name="Madeira A.M.B.N."/>
            <person name="Martinez-Rossi N.M."/>
            <person name="Martins E.C."/>
            <person name="Meidanis J."/>
            <person name="Menck C.F.M."/>
            <person name="Miyaki C.Y."/>
            <person name="Moon D.H."/>
            <person name="Moreira L.M."/>
            <person name="Novo M.T.M."/>
            <person name="Okura V.K."/>
            <person name="Oliveira M.C."/>
            <person name="Oliveira V.R."/>
            <person name="Pereira H.A."/>
            <person name="Rossi A."/>
            <person name="Sena J.A.D."/>
            <person name="Silva C."/>
            <person name="de Souza R.F."/>
            <person name="Spinola L.A.F."/>
            <person name="Takita M.A."/>
            <person name="Tamura R.E."/>
            <person name="Teixeira E.C."/>
            <person name="Tezza R.I.D."/>
            <person name="Trindade dos Santos M."/>
            <person name="Truffi D."/>
            <person name="Tsai S.M."/>
            <person name="White F.F."/>
            <person name="Setubal J.C."/>
            <person name="Kitajima J.P."/>
        </authorList>
    </citation>
    <scope>NUCLEOTIDE SEQUENCE [LARGE SCALE GENOMIC DNA]</scope>
    <source>
        <strain>306</strain>
    </source>
</reference>
<keyword id="KW-0687">Ribonucleoprotein</keyword>
<keyword id="KW-0689">Ribosomal protein</keyword>
<proteinExistence type="inferred from homology"/>